<evidence type="ECO:0000255" key="1">
    <source>
        <dbReference type="HAMAP-Rule" id="MF_01853"/>
    </source>
</evidence>
<proteinExistence type="inferred from homology"/>
<dbReference type="EC" id="3.1.-.-" evidence="1"/>
<dbReference type="EMBL" id="CP000660">
    <property type="protein sequence ID" value="ABP51265.1"/>
    <property type="molecule type" value="Genomic_DNA"/>
</dbReference>
<dbReference type="RefSeq" id="WP_011901171.1">
    <property type="nucleotide sequence ID" value="NC_009376.1"/>
</dbReference>
<dbReference type="SMR" id="A4WLJ8"/>
<dbReference type="STRING" id="340102.Pars_1714"/>
<dbReference type="GeneID" id="5054585"/>
<dbReference type="KEGG" id="pas:Pars_1714"/>
<dbReference type="HOGENOM" id="CLU_023334_0_0_2"/>
<dbReference type="OrthoDB" id="31300at2157"/>
<dbReference type="PhylomeDB" id="A4WLJ8"/>
<dbReference type="Proteomes" id="UP000001567">
    <property type="component" value="Chromosome"/>
</dbReference>
<dbReference type="GO" id="GO:0005737">
    <property type="term" value="C:cytoplasm"/>
    <property type="evidence" value="ECO:0007669"/>
    <property type="project" value="UniProtKB-SubCell"/>
</dbReference>
<dbReference type="GO" id="GO:0004519">
    <property type="term" value="F:endonuclease activity"/>
    <property type="evidence" value="ECO:0007669"/>
    <property type="project" value="UniProtKB-UniRule"/>
</dbReference>
<dbReference type="GO" id="GO:0046872">
    <property type="term" value="F:metal ion binding"/>
    <property type="evidence" value="ECO:0007669"/>
    <property type="project" value="UniProtKB-UniRule"/>
</dbReference>
<dbReference type="GO" id="GO:0070651">
    <property type="term" value="P:nonfunctional rRNA decay"/>
    <property type="evidence" value="ECO:0007669"/>
    <property type="project" value="TreeGrafter"/>
</dbReference>
<dbReference type="GO" id="GO:0070966">
    <property type="term" value="P:nuclear-transcribed mRNA catabolic process, no-go decay"/>
    <property type="evidence" value="ECO:0007669"/>
    <property type="project" value="InterPro"/>
</dbReference>
<dbReference type="GO" id="GO:0070481">
    <property type="term" value="P:nuclear-transcribed mRNA catabolic process, non-stop decay"/>
    <property type="evidence" value="ECO:0007669"/>
    <property type="project" value="InterPro"/>
</dbReference>
<dbReference type="GO" id="GO:0032790">
    <property type="term" value="P:ribosome disassembly"/>
    <property type="evidence" value="ECO:0007669"/>
    <property type="project" value="TreeGrafter"/>
</dbReference>
<dbReference type="GO" id="GO:0071025">
    <property type="term" value="P:RNA surveillance"/>
    <property type="evidence" value="ECO:0007669"/>
    <property type="project" value="InterPro"/>
</dbReference>
<dbReference type="Gene3D" id="3.30.1330.30">
    <property type="match status" value="1"/>
</dbReference>
<dbReference type="Gene3D" id="3.30.420.60">
    <property type="entry name" value="eRF1 domain 2"/>
    <property type="match status" value="1"/>
</dbReference>
<dbReference type="Gene3D" id="2.30.30.870">
    <property type="entry name" value="Pelota, domain A"/>
    <property type="match status" value="1"/>
</dbReference>
<dbReference type="HAMAP" id="MF_01853">
    <property type="entry name" value="PelO"/>
    <property type="match status" value="1"/>
</dbReference>
<dbReference type="InterPro" id="IPR042226">
    <property type="entry name" value="eFR1_2_sf"/>
</dbReference>
<dbReference type="InterPro" id="IPR005140">
    <property type="entry name" value="eRF1_1_Pelota"/>
</dbReference>
<dbReference type="InterPro" id="IPR005142">
    <property type="entry name" value="eRF1_3"/>
</dbReference>
<dbReference type="InterPro" id="IPR038069">
    <property type="entry name" value="Pelota/DOM34_N"/>
</dbReference>
<dbReference type="InterPro" id="IPR023521">
    <property type="entry name" value="Pelota_arc"/>
</dbReference>
<dbReference type="InterPro" id="IPR029064">
    <property type="entry name" value="Ribosomal_eL30-like_sf"/>
</dbReference>
<dbReference type="InterPro" id="IPR004405">
    <property type="entry name" value="Transl-rel_pelota"/>
</dbReference>
<dbReference type="PANTHER" id="PTHR10853">
    <property type="entry name" value="PELOTA"/>
    <property type="match status" value="1"/>
</dbReference>
<dbReference type="PANTHER" id="PTHR10853:SF0">
    <property type="entry name" value="PROTEIN PELOTA HOMOLOG"/>
    <property type="match status" value="1"/>
</dbReference>
<dbReference type="Pfam" id="PF03463">
    <property type="entry name" value="eRF1_1"/>
    <property type="match status" value="1"/>
</dbReference>
<dbReference type="Pfam" id="PF03465">
    <property type="entry name" value="eRF1_3"/>
    <property type="match status" value="1"/>
</dbReference>
<dbReference type="SMART" id="SM01194">
    <property type="entry name" value="eRF1_1"/>
    <property type="match status" value="1"/>
</dbReference>
<dbReference type="SUPFAM" id="SSF159065">
    <property type="entry name" value="Dom34/Pelota N-terminal domain-like"/>
    <property type="match status" value="1"/>
</dbReference>
<dbReference type="SUPFAM" id="SSF55315">
    <property type="entry name" value="L30e-like"/>
    <property type="match status" value="1"/>
</dbReference>
<dbReference type="SUPFAM" id="SSF53137">
    <property type="entry name" value="Translational machinery components"/>
    <property type="match status" value="1"/>
</dbReference>
<comment type="function">
    <text evidence="1">May function in recognizing stalled ribosomes, interact with stem-loop structures in stalled mRNA molecules, and effect endonucleolytic cleavage of the mRNA. May play a role in the release non-functional ribosomes and degradation of damaged mRNAs. Has endoribonuclease activity.</text>
</comment>
<comment type="cofactor">
    <cofactor evidence="1">
        <name>a divalent metal cation</name>
        <dbReference type="ChEBI" id="CHEBI:60240"/>
    </cofactor>
</comment>
<comment type="subunit">
    <text evidence="1">Monomer.</text>
</comment>
<comment type="subcellular location">
    <subcellularLocation>
        <location evidence="1">Cytoplasm</location>
    </subcellularLocation>
</comment>
<comment type="domain">
    <text evidence="1">The N-terminal domain has the RNA-binding Sm fold. It harbors the endoribonuclease activity.</text>
</comment>
<comment type="similarity">
    <text evidence="1">Belongs to the eukaryotic release factor 1 family. Pelota subfamily.</text>
</comment>
<feature type="chain" id="PRO_0000361814" description="Protein pelota homolog">
    <location>
        <begin position="1"/>
        <end position="333"/>
    </location>
</feature>
<protein>
    <recommendedName>
        <fullName evidence="1">Protein pelota homolog</fullName>
        <ecNumber evidence="1">3.1.-.-</ecNumber>
    </recommendedName>
</protein>
<gene>
    <name evidence="1" type="primary">pelA</name>
    <name type="ordered locus">Pars_1714</name>
</gene>
<reference key="1">
    <citation type="submission" date="2007-04" db="EMBL/GenBank/DDBJ databases">
        <title>Complete sequence of Pyrobaculum arsenaticum DSM 13514.</title>
        <authorList>
            <consortium name="US DOE Joint Genome Institute"/>
            <person name="Copeland A."/>
            <person name="Lucas S."/>
            <person name="Lapidus A."/>
            <person name="Barry K."/>
            <person name="Glavina del Rio T."/>
            <person name="Dalin E."/>
            <person name="Tice H."/>
            <person name="Pitluck S."/>
            <person name="Chain P."/>
            <person name="Malfatti S."/>
            <person name="Shin M."/>
            <person name="Vergez L."/>
            <person name="Schmutz J."/>
            <person name="Larimer F."/>
            <person name="Land M."/>
            <person name="Hauser L."/>
            <person name="Kyrpides N."/>
            <person name="Mikhailova N."/>
            <person name="Cozen A.E."/>
            <person name="Fitz-Gibbon S.T."/>
            <person name="House C.H."/>
            <person name="Saltikov C."/>
            <person name="Lowe T.M."/>
            <person name="Richardson P."/>
        </authorList>
    </citation>
    <scope>NUCLEOTIDE SEQUENCE [LARGE SCALE GENOMIC DNA]</scope>
    <source>
        <strain>ATCC 700994 / DSM 13514 / JCM 11321 / PZ6</strain>
    </source>
</reference>
<sequence>MRYEVDKRRRIVRVTPERDEDLYFLYLLIDVGDVVRGWTVREYKPDGTKEGERVKMFLGIKVEALEYHKFRGSLRVRGPVVEVEEGIEGVKGRRHTFDIVAGREVEIEKGDEEALEAAEGVLEMAKGILPRILLVSVDDEEAAFAYVTALGVEVLYFLRNDARRGGEEGSLLDEFLAAVGKATENLRRRYNPDKVVLAGPHIILEHVARYVHGDRIPQSSGGLAGVYEFVRRGLYDAFKAEIGFSAYEKLLQLLATNSERVATGPKDVEEAASAGRIDALLVLDSFIKENPREVWAIISRAYKSRSKIFIIREDTEIGVGLRAMGGVAAILRW</sequence>
<accession>A4WLJ8</accession>
<name>PELO_PYRAR</name>
<keyword id="KW-0963">Cytoplasm</keyword>
<keyword id="KW-0255">Endonuclease</keyword>
<keyword id="KW-0378">Hydrolase</keyword>
<keyword id="KW-0479">Metal-binding</keyword>
<keyword id="KW-0540">Nuclease</keyword>
<organism>
    <name type="scientific">Pyrobaculum arsenaticum (strain DSM 13514 / JCM 11321 / PZ6)</name>
    <dbReference type="NCBI Taxonomy" id="340102"/>
    <lineage>
        <taxon>Archaea</taxon>
        <taxon>Thermoproteota</taxon>
        <taxon>Thermoprotei</taxon>
        <taxon>Thermoproteales</taxon>
        <taxon>Thermoproteaceae</taxon>
        <taxon>Pyrobaculum</taxon>
    </lineage>
</organism>